<proteinExistence type="inferred from homology"/>
<sequence>MSKVGTSDSKNTLYCSFCGKSQHEVRKLIAGPTVFICDECVELCMDIIREENKSSLVKSRDGIPTPKEICKVLDDYVIGQGHAKKVLSVAVHNHYKRLNHQTKHNDVELAKSNILLIGPTGSGKTLLAQTLARILDVPFTMADATTLTEAGYVGEDVENIILKLLQAADYNVERAQRGIVYIDEIDKISRKSDNPSITRDVSGEGVQQALLKIMEGTVASVPPQGGRKHPQQEFLQVDTTNILFICGGAFAGLEKIISARGRSTSIGFAAQVLAPEDRRTGEIFRHVEPEDLLKYGLIPEFVGRLPVVATLEDLDEASLKKILTDPKNALVKQYQRLFEMENIELTFADEALGAVARKAIERKTGARGLRSILESILLETMFDLPGLEGVEEVVISREVVDGTARPLYIYADRSDRAAESSASA</sequence>
<protein>
    <recommendedName>
        <fullName evidence="1">ATP-dependent Clp protease ATP-binding subunit ClpX</fullName>
    </recommendedName>
</protein>
<name>CLPX_RHOPS</name>
<keyword id="KW-0067">ATP-binding</keyword>
<keyword id="KW-0143">Chaperone</keyword>
<keyword id="KW-0479">Metal-binding</keyword>
<keyword id="KW-0547">Nucleotide-binding</keyword>
<keyword id="KW-0862">Zinc</keyword>
<accession>Q135W8</accession>
<evidence type="ECO:0000255" key="1">
    <source>
        <dbReference type="HAMAP-Rule" id="MF_00175"/>
    </source>
</evidence>
<evidence type="ECO:0000255" key="2">
    <source>
        <dbReference type="PROSITE-ProRule" id="PRU01250"/>
    </source>
</evidence>
<gene>
    <name evidence="1" type="primary">clpX</name>
    <name type="ordered locus">RPD_2893</name>
</gene>
<feature type="chain" id="PRO_1000024636" description="ATP-dependent Clp protease ATP-binding subunit ClpX">
    <location>
        <begin position="1"/>
        <end position="424"/>
    </location>
</feature>
<feature type="domain" description="ClpX-type ZB" evidence="2">
    <location>
        <begin position="3"/>
        <end position="56"/>
    </location>
</feature>
<feature type="binding site" evidence="2">
    <location>
        <position position="15"/>
    </location>
    <ligand>
        <name>Zn(2+)</name>
        <dbReference type="ChEBI" id="CHEBI:29105"/>
    </ligand>
</feature>
<feature type="binding site" evidence="2">
    <location>
        <position position="18"/>
    </location>
    <ligand>
        <name>Zn(2+)</name>
        <dbReference type="ChEBI" id="CHEBI:29105"/>
    </ligand>
</feature>
<feature type="binding site" evidence="2">
    <location>
        <position position="37"/>
    </location>
    <ligand>
        <name>Zn(2+)</name>
        <dbReference type="ChEBI" id="CHEBI:29105"/>
    </ligand>
</feature>
<feature type="binding site" evidence="2">
    <location>
        <position position="40"/>
    </location>
    <ligand>
        <name>Zn(2+)</name>
        <dbReference type="ChEBI" id="CHEBI:29105"/>
    </ligand>
</feature>
<feature type="binding site" evidence="1">
    <location>
        <begin position="119"/>
        <end position="126"/>
    </location>
    <ligand>
        <name>ATP</name>
        <dbReference type="ChEBI" id="CHEBI:30616"/>
    </ligand>
</feature>
<dbReference type="EMBL" id="CP000283">
    <property type="protein sequence ID" value="ABE40121.1"/>
    <property type="molecule type" value="Genomic_DNA"/>
</dbReference>
<dbReference type="SMR" id="Q135W8"/>
<dbReference type="STRING" id="316057.RPD_2893"/>
<dbReference type="KEGG" id="rpd:RPD_2893"/>
<dbReference type="eggNOG" id="COG1219">
    <property type="taxonomic scope" value="Bacteria"/>
</dbReference>
<dbReference type="HOGENOM" id="CLU_014218_8_2_5"/>
<dbReference type="BioCyc" id="RPAL316057:RPD_RS14545-MONOMER"/>
<dbReference type="Proteomes" id="UP000001818">
    <property type="component" value="Chromosome"/>
</dbReference>
<dbReference type="GO" id="GO:0009376">
    <property type="term" value="C:HslUV protease complex"/>
    <property type="evidence" value="ECO:0007669"/>
    <property type="project" value="TreeGrafter"/>
</dbReference>
<dbReference type="GO" id="GO:0005524">
    <property type="term" value="F:ATP binding"/>
    <property type="evidence" value="ECO:0007669"/>
    <property type="project" value="UniProtKB-UniRule"/>
</dbReference>
<dbReference type="GO" id="GO:0016887">
    <property type="term" value="F:ATP hydrolysis activity"/>
    <property type="evidence" value="ECO:0007669"/>
    <property type="project" value="InterPro"/>
</dbReference>
<dbReference type="GO" id="GO:0140662">
    <property type="term" value="F:ATP-dependent protein folding chaperone"/>
    <property type="evidence" value="ECO:0007669"/>
    <property type="project" value="InterPro"/>
</dbReference>
<dbReference type="GO" id="GO:0046983">
    <property type="term" value="F:protein dimerization activity"/>
    <property type="evidence" value="ECO:0007669"/>
    <property type="project" value="InterPro"/>
</dbReference>
<dbReference type="GO" id="GO:0051082">
    <property type="term" value="F:unfolded protein binding"/>
    <property type="evidence" value="ECO:0007669"/>
    <property type="project" value="UniProtKB-UniRule"/>
</dbReference>
<dbReference type="GO" id="GO:0008270">
    <property type="term" value="F:zinc ion binding"/>
    <property type="evidence" value="ECO:0007669"/>
    <property type="project" value="InterPro"/>
</dbReference>
<dbReference type="GO" id="GO:0051301">
    <property type="term" value="P:cell division"/>
    <property type="evidence" value="ECO:0007669"/>
    <property type="project" value="TreeGrafter"/>
</dbReference>
<dbReference type="GO" id="GO:0051603">
    <property type="term" value="P:proteolysis involved in protein catabolic process"/>
    <property type="evidence" value="ECO:0007669"/>
    <property type="project" value="TreeGrafter"/>
</dbReference>
<dbReference type="CDD" id="cd19497">
    <property type="entry name" value="RecA-like_ClpX"/>
    <property type="match status" value="1"/>
</dbReference>
<dbReference type="FunFam" id="1.10.8.60:FF:000002">
    <property type="entry name" value="ATP-dependent Clp protease ATP-binding subunit ClpX"/>
    <property type="match status" value="1"/>
</dbReference>
<dbReference type="FunFam" id="3.40.50.300:FF:000005">
    <property type="entry name" value="ATP-dependent Clp protease ATP-binding subunit ClpX"/>
    <property type="match status" value="1"/>
</dbReference>
<dbReference type="Gene3D" id="1.10.8.60">
    <property type="match status" value="1"/>
</dbReference>
<dbReference type="Gene3D" id="6.20.220.10">
    <property type="entry name" value="ClpX chaperone, C4-type zinc finger domain"/>
    <property type="match status" value="1"/>
</dbReference>
<dbReference type="Gene3D" id="3.40.50.300">
    <property type="entry name" value="P-loop containing nucleotide triphosphate hydrolases"/>
    <property type="match status" value="1"/>
</dbReference>
<dbReference type="HAMAP" id="MF_00175">
    <property type="entry name" value="ClpX"/>
    <property type="match status" value="1"/>
</dbReference>
<dbReference type="InterPro" id="IPR003593">
    <property type="entry name" value="AAA+_ATPase"/>
</dbReference>
<dbReference type="InterPro" id="IPR050052">
    <property type="entry name" value="ATP-dep_Clp_protease_ClpX"/>
</dbReference>
<dbReference type="InterPro" id="IPR003959">
    <property type="entry name" value="ATPase_AAA_core"/>
</dbReference>
<dbReference type="InterPro" id="IPR019489">
    <property type="entry name" value="Clp_ATPase_C"/>
</dbReference>
<dbReference type="InterPro" id="IPR004487">
    <property type="entry name" value="Clp_protease_ATP-bd_su_ClpX"/>
</dbReference>
<dbReference type="InterPro" id="IPR046425">
    <property type="entry name" value="ClpX_bact"/>
</dbReference>
<dbReference type="InterPro" id="IPR027417">
    <property type="entry name" value="P-loop_NTPase"/>
</dbReference>
<dbReference type="InterPro" id="IPR010603">
    <property type="entry name" value="Znf_CppX_C4"/>
</dbReference>
<dbReference type="InterPro" id="IPR038366">
    <property type="entry name" value="Znf_CppX_C4_sf"/>
</dbReference>
<dbReference type="NCBIfam" id="TIGR00382">
    <property type="entry name" value="clpX"/>
    <property type="match status" value="1"/>
</dbReference>
<dbReference type="NCBIfam" id="NF003745">
    <property type="entry name" value="PRK05342.1"/>
    <property type="match status" value="1"/>
</dbReference>
<dbReference type="PANTHER" id="PTHR48102:SF7">
    <property type="entry name" value="ATP-DEPENDENT CLP PROTEASE ATP-BINDING SUBUNIT CLPX-LIKE, MITOCHONDRIAL"/>
    <property type="match status" value="1"/>
</dbReference>
<dbReference type="PANTHER" id="PTHR48102">
    <property type="entry name" value="ATP-DEPENDENT CLP PROTEASE ATP-BINDING SUBUNIT CLPX-LIKE, MITOCHONDRIAL-RELATED"/>
    <property type="match status" value="1"/>
</dbReference>
<dbReference type="Pfam" id="PF07724">
    <property type="entry name" value="AAA_2"/>
    <property type="match status" value="1"/>
</dbReference>
<dbReference type="Pfam" id="PF10431">
    <property type="entry name" value="ClpB_D2-small"/>
    <property type="match status" value="1"/>
</dbReference>
<dbReference type="Pfam" id="PF06689">
    <property type="entry name" value="zf-C4_ClpX"/>
    <property type="match status" value="1"/>
</dbReference>
<dbReference type="SMART" id="SM00382">
    <property type="entry name" value="AAA"/>
    <property type="match status" value="1"/>
</dbReference>
<dbReference type="SMART" id="SM01086">
    <property type="entry name" value="ClpB_D2-small"/>
    <property type="match status" value="1"/>
</dbReference>
<dbReference type="SMART" id="SM00994">
    <property type="entry name" value="zf-C4_ClpX"/>
    <property type="match status" value="1"/>
</dbReference>
<dbReference type="SUPFAM" id="SSF57716">
    <property type="entry name" value="Glucocorticoid receptor-like (DNA-binding domain)"/>
    <property type="match status" value="1"/>
</dbReference>
<dbReference type="SUPFAM" id="SSF52540">
    <property type="entry name" value="P-loop containing nucleoside triphosphate hydrolases"/>
    <property type="match status" value="1"/>
</dbReference>
<dbReference type="PROSITE" id="PS51902">
    <property type="entry name" value="CLPX_ZB"/>
    <property type="match status" value="1"/>
</dbReference>
<organism>
    <name type="scientific">Rhodopseudomonas palustris (strain BisB5)</name>
    <dbReference type="NCBI Taxonomy" id="316057"/>
    <lineage>
        <taxon>Bacteria</taxon>
        <taxon>Pseudomonadati</taxon>
        <taxon>Pseudomonadota</taxon>
        <taxon>Alphaproteobacteria</taxon>
        <taxon>Hyphomicrobiales</taxon>
        <taxon>Nitrobacteraceae</taxon>
        <taxon>Rhodopseudomonas</taxon>
    </lineage>
</organism>
<comment type="function">
    <text evidence="1">ATP-dependent specificity component of the Clp protease. It directs the protease to specific substrates. Can perform chaperone functions in the absence of ClpP.</text>
</comment>
<comment type="subunit">
    <text evidence="1">Component of the ClpX-ClpP complex. Forms a hexameric ring that, in the presence of ATP, binds to fourteen ClpP subunits assembled into a disk-like structure with a central cavity, resembling the structure of eukaryotic proteasomes.</text>
</comment>
<comment type="similarity">
    <text evidence="1">Belongs to the ClpX chaperone family.</text>
</comment>
<reference key="1">
    <citation type="submission" date="2006-03" db="EMBL/GenBank/DDBJ databases">
        <title>Complete sequence of Rhodopseudomonas palustris BisB5.</title>
        <authorList>
            <consortium name="US DOE Joint Genome Institute"/>
            <person name="Copeland A."/>
            <person name="Lucas S."/>
            <person name="Lapidus A."/>
            <person name="Barry K."/>
            <person name="Detter J.C."/>
            <person name="Glavina del Rio T."/>
            <person name="Hammon N."/>
            <person name="Israni S."/>
            <person name="Dalin E."/>
            <person name="Tice H."/>
            <person name="Pitluck S."/>
            <person name="Chain P."/>
            <person name="Malfatti S."/>
            <person name="Shin M."/>
            <person name="Vergez L."/>
            <person name="Schmutz J."/>
            <person name="Larimer F."/>
            <person name="Land M."/>
            <person name="Hauser L."/>
            <person name="Pelletier D.A."/>
            <person name="Kyrpides N."/>
            <person name="Lykidis A."/>
            <person name="Oda Y."/>
            <person name="Harwood C.S."/>
            <person name="Richardson P."/>
        </authorList>
    </citation>
    <scope>NUCLEOTIDE SEQUENCE [LARGE SCALE GENOMIC DNA]</scope>
    <source>
        <strain>BisB5</strain>
    </source>
</reference>